<gene>
    <name type="primary">nst1</name>
    <name type="ORF">ACLA_038250</name>
</gene>
<protein>
    <recommendedName>
        <fullName>Stress response protein nst1</fullName>
    </recommendedName>
</protein>
<dbReference type="EMBL" id="DS027056">
    <property type="protein sequence ID" value="EAW09614.1"/>
    <property type="molecule type" value="Genomic_DNA"/>
</dbReference>
<dbReference type="RefSeq" id="XP_001271040.1">
    <property type="nucleotide sequence ID" value="XM_001271039.1"/>
</dbReference>
<dbReference type="SMR" id="A1CKE0"/>
<dbReference type="STRING" id="344612.A1CKE0"/>
<dbReference type="EnsemblFungi" id="EAW09614">
    <property type="protein sequence ID" value="EAW09614"/>
    <property type="gene ID" value="ACLA_038250"/>
</dbReference>
<dbReference type="GeneID" id="4702898"/>
<dbReference type="KEGG" id="act:ACLA_038250"/>
<dbReference type="VEuPathDB" id="FungiDB:ACLA_038250"/>
<dbReference type="eggNOG" id="ENOG502QSSK">
    <property type="taxonomic scope" value="Eukaryota"/>
</dbReference>
<dbReference type="HOGENOM" id="CLU_002935_0_0_1"/>
<dbReference type="OMA" id="EEDTQYG"/>
<dbReference type="OrthoDB" id="21629at2759"/>
<dbReference type="Proteomes" id="UP000006701">
    <property type="component" value="Unassembled WGS sequence"/>
</dbReference>
<dbReference type="GO" id="GO:0005737">
    <property type="term" value="C:cytoplasm"/>
    <property type="evidence" value="ECO:0007669"/>
    <property type="project" value="UniProtKB-SubCell"/>
</dbReference>
<dbReference type="InterPro" id="IPR051195">
    <property type="entry name" value="Fungal_stress_NST1"/>
</dbReference>
<dbReference type="InterPro" id="IPR025279">
    <property type="entry name" value="NST1"/>
</dbReference>
<dbReference type="PANTHER" id="PTHR31780:SF10">
    <property type="entry name" value="LD36051P"/>
    <property type="match status" value="1"/>
</dbReference>
<dbReference type="PANTHER" id="PTHR31780">
    <property type="entry name" value="STRESS RESPONSE PROTEIN NST1-RELATED"/>
    <property type="match status" value="1"/>
</dbReference>
<dbReference type="Pfam" id="PF13945">
    <property type="entry name" value="NST1"/>
    <property type="match status" value="1"/>
</dbReference>
<reference key="1">
    <citation type="journal article" date="2008" name="PLoS Genet.">
        <title>Genomic islands in the pathogenic filamentous fungus Aspergillus fumigatus.</title>
        <authorList>
            <person name="Fedorova N.D."/>
            <person name="Khaldi N."/>
            <person name="Joardar V.S."/>
            <person name="Maiti R."/>
            <person name="Amedeo P."/>
            <person name="Anderson M.J."/>
            <person name="Crabtree J."/>
            <person name="Silva J.C."/>
            <person name="Badger J.H."/>
            <person name="Albarraq A."/>
            <person name="Angiuoli S."/>
            <person name="Bussey H."/>
            <person name="Bowyer P."/>
            <person name="Cotty P.J."/>
            <person name="Dyer P.S."/>
            <person name="Egan A."/>
            <person name="Galens K."/>
            <person name="Fraser-Liggett C.M."/>
            <person name="Haas B.J."/>
            <person name="Inman J.M."/>
            <person name="Kent R."/>
            <person name="Lemieux S."/>
            <person name="Malavazi I."/>
            <person name="Orvis J."/>
            <person name="Roemer T."/>
            <person name="Ronning C.M."/>
            <person name="Sundaram J.P."/>
            <person name="Sutton G."/>
            <person name="Turner G."/>
            <person name="Venter J.C."/>
            <person name="White O.R."/>
            <person name="Whitty B.R."/>
            <person name="Youngman P."/>
            <person name="Wolfe K.H."/>
            <person name="Goldman G.H."/>
            <person name="Wortman J.R."/>
            <person name="Jiang B."/>
            <person name="Denning D.W."/>
            <person name="Nierman W.C."/>
        </authorList>
    </citation>
    <scope>NUCLEOTIDE SEQUENCE [LARGE SCALE GENOMIC DNA]</scope>
    <source>
        <strain>ATCC 1007 / CBS 513.65 / DSM 816 / NCTC 3887 / NRRL 1 / QM 1276 / 107</strain>
    </source>
</reference>
<sequence length="1126" mass="125060">MSTAAPAASATNSAIPAQKEFSLPPSTDTVSVPVNRKKQKRRQKQAARLAAERQSNGHISPDAATQNGSSPAADPEGYHSDEFGDVDQEQLSNGDANHKDDQDSVDAHDDYQYPGNGSEGLQKPTGRKSKKKKGKKGPNGTHAPEDETATHASTPSVSMSHPLPPTLPSHLGPRPILKPAKTRSIWNTSTQEERENIKTFWLELGEEERRQLVKVEKDAVLKKMKEQQRHSCSCTVCGRKRTAIEEELEVLYDAYYEELEQYANHNQGSFEKGPPIVPPPRLYQPPLRSPGQHTRTQGQFHPSRGRIHEVPEEEDDDDLEEDYDEDEEDDEPYSDEDSDDEDDEARAARADFFAFGNSLTVKDGILTVADDLLKNDGKHFIDMMEQLAERRMQREEDTQYGIAAAHQSLHSGHNHGPFDEEDYDEEEDEDYDSQEDEDYEEDEMDTMTEEQRMEEGRRMFQIFAARMFEQRVLTAYREKVAEQRQQKLIEELLEEETRNEQRNAKKAREAQKRKDKKKLQKQAKEEERARREAEKAAEEAAAKAEQEKKLEEQRKKREEQRKKKEADRKAQEEERARKEAEKLRRQREERERQAEVERKQREEKKRREEARRKEKEERELREKKAKEEQLQKDAAKAEEAAKEREKREYQAKRTSPFSSNQHPQISSSPVAHSPHIQSGIPVVPKAPTPARPRQPSQQDSHTSSPHSQPASTDPSQASVSPRSMPISQSSGASSVASKHVHGLHAMFHQPQPSAPLSPLGRSIPPGFSAMNGLPPGPPGLTGILGRPPMAHELPVYPPHSGPFIGQFRGYPTPNGIPAAPGINGARAMPPGRGFPLESAHGFPFHGQQQIPGAFSAQQSGLPHGHSRQPSGSFERSPLEGQTQPMPISRPSPIKRPSSTQQDQRKNGDRTAQRDVDDLSAHLGSSALLDDTDVPFASTLSQSLPGATAPGPLPGPARASFGGPSLFPDPLSTSGWSNNAFGSGVHHRAHTSRPVAIRLLVIQACKQLNTMSPFKGADGFHDVSLVLRQVEQLRPQNEPSISLKEMLDICDTEGSTQNGGGSFSTKKDETGEFVKFEPDNNSAASGHRGSIVPGEIGSPVPSSSLPAFGGIGTPSVLRQFSSPPMGF</sequence>
<accession>A1CKE0</accession>
<feature type="chain" id="PRO_0000324439" description="Stress response protein nst1">
    <location>
        <begin position="1"/>
        <end position="1126"/>
    </location>
</feature>
<feature type="region of interest" description="Disordered" evidence="3">
    <location>
        <begin position="1"/>
        <end position="192"/>
    </location>
</feature>
<feature type="region of interest" description="Disordered" evidence="3">
    <location>
        <begin position="266"/>
        <end position="348"/>
    </location>
</feature>
<feature type="region of interest" description="Disordered" evidence="3">
    <location>
        <begin position="404"/>
        <end position="453"/>
    </location>
</feature>
<feature type="region of interest" description="Disordered" evidence="3">
    <location>
        <begin position="492"/>
        <end position="774"/>
    </location>
</feature>
<feature type="region of interest" description="Disordered" evidence="3">
    <location>
        <begin position="823"/>
        <end position="914"/>
    </location>
</feature>
<feature type="region of interest" description="Disordered" evidence="3">
    <location>
        <begin position="939"/>
        <end position="965"/>
    </location>
</feature>
<feature type="region of interest" description="Disordered" evidence="3">
    <location>
        <begin position="1075"/>
        <end position="1126"/>
    </location>
</feature>
<feature type="coiled-coil region" evidence="2">
    <location>
        <begin position="479"/>
        <end position="655"/>
    </location>
</feature>
<feature type="compositionally biased region" description="Low complexity" evidence="3">
    <location>
        <begin position="1"/>
        <end position="17"/>
    </location>
</feature>
<feature type="compositionally biased region" description="Basic residues" evidence="3">
    <location>
        <begin position="35"/>
        <end position="45"/>
    </location>
</feature>
<feature type="compositionally biased region" description="Basic and acidic residues" evidence="3">
    <location>
        <begin position="96"/>
        <end position="111"/>
    </location>
</feature>
<feature type="compositionally biased region" description="Basic residues" evidence="3">
    <location>
        <begin position="125"/>
        <end position="136"/>
    </location>
</feature>
<feature type="compositionally biased region" description="Polar residues" evidence="3">
    <location>
        <begin position="291"/>
        <end position="300"/>
    </location>
</feature>
<feature type="compositionally biased region" description="Acidic residues" evidence="3">
    <location>
        <begin position="311"/>
        <end position="344"/>
    </location>
</feature>
<feature type="compositionally biased region" description="Acidic residues" evidence="3">
    <location>
        <begin position="419"/>
        <end position="448"/>
    </location>
</feature>
<feature type="compositionally biased region" description="Basic and acidic residues" evidence="3">
    <location>
        <begin position="492"/>
        <end position="512"/>
    </location>
</feature>
<feature type="compositionally biased region" description="Basic and acidic residues" evidence="3">
    <location>
        <begin position="522"/>
        <end position="651"/>
    </location>
</feature>
<feature type="compositionally biased region" description="Polar residues" evidence="3">
    <location>
        <begin position="655"/>
        <end position="670"/>
    </location>
</feature>
<feature type="compositionally biased region" description="Polar residues" evidence="3">
    <location>
        <begin position="694"/>
        <end position="721"/>
    </location>
</feature>
<feature type="compositionally biased region" description="Low complexity" evidence="3">
    <location>
        <begin position="727"/>
        <end position="737"/>
    </location>
</feature>
<feature type="compositionally biased region" description="Polar residues" evidence="3">
    <location>
        <begin position="846"/>
        <end position="860"/>
    </location>
</feature>
<feature type="compositionally biased region" description="Polar residues" evidence="3">
    <location>
        <begin position="867"/>
        <end position="885"/>
    </location>
</feature>
<feature type="compositionally biased region" description="Low complexity" evidence="3">
    <location>
        <begin position="886"/>
        <end position="898"/>
    </location>
</feature>
<feature type="compositionally biased region" description="Basic and acidic residues" evidence="3">
    <location>
        <begin position="902"/>
        <end position="914"/>
    </location>
</feature>
<feature type="compositionally biased region" description="Polar residues" evidence="3">
    <location>
        <begin position="1115"/>
        <end position="1126"/>
    </location>
</feature>
<comment type="function">
    <text evidence="1">May act as a negative regulator of salt tolerance.</text>
</comment>
<comment type="subcellular location">
    <subcellularLocation>
        <location evidence="1">Cytoplasm</location>
    </subcellularLocation>
</comment>
<comment type="similarity">
    <text evidence="4">Belongs to the NST1 family.</text>
</comment>
<evidence type="ECO:0000250" key="1"/>
<evidence type="ECO:0000255" key="2"/>
<evidence type="ECO:0000256" key="3">
    <source>
        <dbReference type="SAM" id="MobiDB-lite"/>
    </source>
</evidence>
<evidence type="ECO:0000305" key="4"/>
<keyword id="KW-0175">Coiled coil</keyword>
<keyword id="KW-0963">Cytoplasm</keyword>
<keyword id="KW-1185">Reference proteome</keyword>
<keyword id="KW-0346">Stress response</keyword>
<proteinExistence type="inferred from homology"/>
<name>NST1_ASPCL</name>
<organism>
    <name type="scientific">Aspergillus clavatus (strain ATCC 1007 / CBS 513.65 / DSM 816 / NCTC 3887 / NRRL 1 / QM 1276 / 107)</name>
    <dbReference type="NCBI Taxonomy" id="344612"/>
    <lineage>
        <taxon>Eukaryota</taxon>
        <taxon>Fungi</taxon>
        <taxon>Dikarya</taxon>
        <taxon>Ascomycota</taxon>
        <taxon>Pezizomycotina</taxon>
        <taxon>Eurotiomycetes</taxon>
        <taxon>Eurotiomycetidae</taxon>
        <taxon>Eurotiales</taxon>
        <taxon>Aspergillaceae</taxon>
        <taxon>Aspergillus</taxon>
        <taxon>Aspergillus subgen. Fumigati</taxon>
    </lineage>
</organism>